<gene>
    <name type="primary">Fancc</name>
    <name type="synonym">Facc</name>
</gene>
<proteinExistence type="evidence at transcript level"/>
<comment type="function">
    <text evidence="1">DNA repair protein that may operate in a postreplication repair or a cell cycle checkpoint function. May be implicated in interstrand DNA cross-link repair and in the maintenance of normal chromosome stability. Upon IFNG induction, may facilitate STAT1 activation by recruiting STAT1 to IFNGR1 (By similarity).</text>
</comment>
<comment type="subunit">
    <text evidence="1">Belongs to the multisubunit FA complex composed of FANCA, FANCB, FANCC, FANCE, FANCF, FANCG, FANCL/PHF9 and FANCM. This complex may also include HSP70. Interacts with ZBTB32. Upon IFNG induction, interacts with STAT1. Interacts with CDK1. Interacts with EIF2AK2 (By similarity).</text>
</comment>
<comment type="subcellular location">
    <subcellularLocation>
        <location evidence="1">Nucleus</location>
    </subcellularLocation>
    <subcellularLocation>
        <location evidence="1">Cytoplasm</location>
    </subcellularLocation>
    <text>The major form is nuclear. The minor form is cytoplasmic.</text>
</comment>
<dbReference type="EMBL" id="U73586">
    <property type="protein sequence ID" value="AAB66675.1"/>
    <property type="molecule type" value="mRNA"/>
</dbReference>
<dbReference type="SMR" id="O35870"/>
<dbReference type="FunCoup" id="O35870">
    <property type="interactions" value="1059"/>
</dbReference>
<dbReference type="STRING" id="10116.ENSRNOP00000022884"/>
<dbReference type="PhosphoSitePlus" id="O35870"/>
<dbReference type="PaxDb" id="10116-ENSRNOP00000022884"/>
<dbReference type="UCSC" id="RGD:2593">
    <property type="organism name" value="rat"/>
</dbReference>
<dbReference type="AGR" id="RGD:2593"/>
<dbReference type="RGD" id="2593">
    <property type="gene designation" value="Fancc"/>
</dbReference>
<dbReference type="eggNOG" id="ENOG502QSB8">
    <property type="taxonomic scope" value="Eukaryota"/>
</dbReference>
<dbReference type="InParanoid" id="O35870"/>
<dbReference type="PhylomeDB" id="O35870"/>
<dbReference type="Reactome" id="R-RNO-6783310">
    <property type="pathway name" value="Fanconi Anemia Pathway"/>
</dbReference>
<dbReference type="Reactome" id="R-RNO-9833482">
    <property type="pathway name" value="PKR-mediated signaling"/>
</dbReference>
<dbReference type="PRO" id="PR:O35870"/>
<dbReference type="Proteomes" id="UP000002494">
    <property type="component" value="Unplaced"/>
</dbReference>
<dbReference type="GO" id="GO:0000785">
    <property type="term" value="C:chromatin"/>
    <property type="evidence" value="ECO:0000314"/>
    <property type="project" value="RGD"/>
</dbReference>
<dbReference type="GO" id="GO:0005829">
    <property type="term" value="C:cytosol"/>
    <property type="evidence" value="ECO:0000266"/>
    <property type="project" value="RGD"/>
</dbReference>
<dbReference type="GO" id="GO:0043240">
    <property type="term" value="C:Fanconi anaemia nuclear complex"/>
    <property type="evidence" value="ECO:0000250"/>
    <property type="project" value="UniProtKB"/>
</dbReference>
<dbReference type="GO" id="GO:0048854">
    <property type="term" value="P:brain morphogenesis"/>
    <property type="evidence" value="ECO:0000266"/>
    <property type="project" value="RGD"/>
</dbReference>
<dbReference type="GO" id="GO:0034599">
    <property type="term" value="P:cellular response to oxidative stress"/>
    <property type="evidence" value="ECO:0000266"/>
    <property type="project" value="RGD"/>
</dbReference>
<dbReference type="GO" id="GO:0007276">
    <property type="term" value="P:gamete generation"/>
    <property type="evidence" value="ECO:0000266"/>
    <property type="project" value="RGD"/>
</dbReference>
<dbReference type="GO" id="GO:0007281">
    <property type="term" value="P:germ cell development"/>
    <property type="evidence" value="ECO:0000266"/>
    <property type="project" value="RGD"/>
</dbReference>
<dbReference type="GO" id="GO:0036297">
    <property type="term" value="P:interstrand cross-link repair"/>
    <property type="evidence" value="ECO:0007669"/>
    <property type="project" value="InterPro"/>
</dbReference>
<dbReference type="GO" id="GO:0002262">
    <property type="term" value="P:myeloid cell homeostasis"/>
    <property type="evidence" value="ECO:0000266"/>
    <property type="project" value="RGD"/>
</dbReference>
<dbReference type="GO" id="GO:0097150">
    <property type="term" value="P:neuronal stem cell population maintenance"/>
    <property type="evidence" value="ECO:0000266"/>
    <property type="project" value="RGD"/>
</dbReference>
<dbReference type="GO" id="GO:0006289">
    <property type="term" value="P:nucleotide-excision repair"/>
    <property type="evidence" value="ECO:0000266"/>
    <property type="project" value="RGD"/>
</dbReference>
<dbReference type="GO" id="GO:0019430">
    <property type="term" value="P:removal of superoxide radicals"/>
    <property type="evidence" value="ECO:0000266"/>
    <property type="project" value="RGD"/>
</dbReference>
<dbReference type="InterPro" id="IPR000686">
    <property type="entry name" value="FANCC"/>
</dbReference>
<dbReference type="PANTHER" id="PTHR16798:SF0">
    <property type="entry name" value="FANCONI ANEMIA GROUP C PROTEIN"/>
    <property type="match status" value="1"/>
</dbReference>
<dbReference type="PANTHER" id="PTHR16798">
    <property type="entry name" value="FANCONI ANEMIA GROUP C PROTEIN FANCC"/>
    <property type="match status" value="1"/>
</dbReference>
<dbReference type="Pfam" id="PF02106">
    <property type="entry name" value="Fanconi_C"/>
    <property type="match status" value="1"/>
</dbReference>
<dbReference type="PIRSF" id="PIRSF018417">
    <property type="entry name" value="FACC_protein"/>
    <property type="match status" value="1"/>
</dbReference>
<dbReference type="PRINTS" id="PR00494">
    <property type="entry name" value="FANCONICGENE"/>
</dbReference>
<feature type="chain" id="PRO_0000087186" description="Fanconi anemia group C protein homolog">
    <location>
        <begin position="1"/>
        <end position="557"/>
    </location>
</feature>
<keyword id="KW-0963">Cytoplasm</keyword>
<keyword id="KW-0227">DNA damage</keyword>
<keyword id="KW-0234">DNA repair</keyword>
<keyword id="KW-0539">Nucleus</keyword>
<keyword id="KW-1185">Reference proteome</keyword>
<protein>
    <recommendedName>
        <fullName>Fanconi anemia group C protein homolog</fullName>
        <shortName>Protein FACC</shortName>
    </recommendedName>
</protein>
<accession>O35870</accession>
<sequence length="557" mass="63592">MAQEPADLASDYQFWLQKLSAWEQASSKETQRDTCLHLSRFQEFLRQMYELLKEMDSDAILERFPSIGQLLAKTCWNPLILAYDESQKIVIWCLCCLMNKAPRTSAESGRNSWIQGLLSHVLSAFRFDMKEVCLFTKSLGYESIDYYPSLLKNMVLSLVSELRGSHLNGLNTQSRMAPERMMSLSQVCVPLVTLPDIEPLVEALLTYHGHEPQEVLSAEFFEAVTEAFLSEKVVLPTSSVVSLWFRHLPSLEKATLHLFEKLFSSKRNCLRRMECCIKESLLPQAACQPAIFRIVDEMFRFVLLETDGAPAVLAALQIFTSCLVEALRKENKQLKFALKTYFPYSAPCLTAALSQQPEAIPQGHRLQPLLHISQLLREAVEDCTDGSHRNPFESWFLFVHFGGWVDLAVEELLLREEAEPPAGLLWLLVFYYSPQDRSQQREQSMVELKVLVNRLLKLLRSGPLSAMDLLEAAESPREDPRPVCGQLVRRLLLSLLFWTPEGHAIVWEAVTHMAHTDAVTHEIVGFLDQTLYRSHHLCVEASRKLARELLKDLQAQV</sequence>
<reference key="1">
    <citation type="journal article" date="1997" name="Mamm. Genome">
        <title>Cloning of the bovine and rat Fanconi anemia group C cDNA.</title>
        <authorList>
            <person name="Wong J.C.Y."/>
            <person name="Alon N."/>
            <person name="Buchwald M."/>
        </authorList>
    </citation>
    <scope>NUCLEOTIDE SEQUENCE [MRNA]</scope>
    <source>
        <tissue>Uterus</tissue>
    </source>
</reference>
<evidence type="ECO:0000250" key="1"/>
<organism>
    <name type="scientific">Rattus norvegicus</name>
    <name type="common">Rat</name>
    <dbReference type="NCBI Taxonomy" id="10116"/>
    <lineage>
        <taxon>Eukaryota</taxon>
        <taxon>Metazoa</taxon>
        <taxon>Chordata</taxon>
        <taxon>Craniata</taxon>
        <taxon>Vertebrata</taxon>
        <taxon>Euteleostomi</taxon>
        <taxon>Mammalia</taxon>
        <taxon>Eutheria</taxon>
        <taxon>Euarchontoglires</taxon>
        <taxon>Glires</taxon>
        <taxon>Rodentia</taxon>
        <taxon>Myomorpha</taxon>
        <taxon>Muroidea</taxon>
        <taxon>Muridae</taxon>
        <taxon>Murinae</taxon>
        <taxon>Rattus</taxon>
    </lineage>
</organism>
<name>FANCC_RAT</name>